<keyword id="KW-1185">Reference proteome</keyword>
<dbReference type="EMBL" id="AL033383">
    <property type="status" value="NOT_ANNOTATED_CDS"/>
    <property type="molecule type" value="Genomic_DNA"/>
</dbReference>
<dbReference type="EMBL" id="BC039349">
    <property type="protein sequence ID" value="AAH39349.1"/>
    <property type="molecule type" value="mRNA"/>
</dbReference>
<dbReference type="CCDS" id="CCDS4489.1"/>
<dbReference type="RefSeq" id="NP_775834.2">
    <property type="nucleotide sequence ID" value="NM_173563.3"/>
</dbReference>
<dbReference type="BioGRID" id="128817">
    <property type="interactions" value="3"/>
</dbReference>
<dbReference type="FunCoup" id="Q8IXS0">
    <property type="interactions" value="1"/>
</dbReference>
<dbReference type="IntAct" id="Q8IXS0">
    <property type="interactions" value="2"/>
</dbReference>
<dbReference type="STRING" id="9606.ENSP00000274673"/>
<dbReference type="GlyGen" id="Q8IXS0">
    <property type="glycosylation" value="1 site, 1 O-linked glycan (1 site)"/>
</dbReference>
<dbReference type="iPTMnet" id="Q8IXS0"/>
<dbReference type="PhosphoSitePlus" id="Q8IXS0"/>
<dbReference type="BioMuta" id="FAM217A"/>
<dbReference type="jPOST" id="Q8IXS0"/>
<dbReference type="MassIVE" id="Q8IXS0"/>
<dbReference type="PaxDb" id="9606-ENSP00000274673"/>
<dbReference type="ProteomicsDB" id="71054"/>
<dbReference type="Antibodypedia" id="44131">
    <property type="antibodies" value="59 antibodies from 14 providers"/>
</dbReference>
<dbReference type="DNASU" id="222826"/>
<dbReference type="Ensembl" id="ENST00000274673.8">
    <property type="protein sequence ID" value="ENSP00000274673.3"/>
    <property type="gene ID" value="ENSG00000145975.15"/>
</dbReference>
<dbReference type="GeneID" id="222826"/>
<dbReference type="KEGG" id="hsa:222826"/>
<dbReference type="MANE-Select" id="ENST00000274673.8">
    <property type="protein sequence ID" value="ENSP00000274673.3"/>
    <property type="RefSeq nucleotide sequence ID" value="NM_173563.3"/>
    <property type="RefSeq protein sequence ID" value="NP_775834.2"/>
</dbReference>
<dbReference type="UCSC" id="uc003mvx.4">
    <property type="organism name" value="human"/>
</dbReference>
<dbReference type="AGR" id="HGNC:21362"/>
<dbReference type="CTD" id="222826"/>
<dbReference type="DisGeNET" id="222826"/>
<dbReference type="GeneCards" id="FAM217A"/>
<dbReference type="HGNC" id="HGNC:21362">
    <property type="gene designation" value="FAM217A"/>
</dbReference>
<dbReference type="HPA" id="ENSG00000145975">
    <property type="expression patterns" value="Tissue enriched (testis)"/>
</dbReference>
<dbReference type="neXtProt" id="NX_Q8IXS0"/>
<dbReference type="OpenTargets" id="ENSG00000145975"/>
<dbReference type="PharmGKB" id="PA134935759"/>
<dbReference type="VEuPathDB" id="HostDB:ENSG00000145975"/>
<dbReference type="eggNOG" id="ENOG502SAD6">
    <property type="taxonomic scope" value="Eukaryota"/>
</dbReference>
<dbReference type="GeneTree" id="ENSGT00940000154543"/>
<dbReference type="HOGENOM" id="CLU_026138_0_0_1"/>
<dbReference type="InParanoid" id="Q8IXS0"/>
<dbReference type="OrthoDB" id="8763336at2759"/>
<dbReference type="PAN-GO" id="Q8IXS0">
    <property type="GO annotations" value="0 GO annotations based on evolutionary models"/>
</dbReference>
<dbReference type="PhylomeDB" id="Q8IXS0"/>
<dbReference type="TreeFam" id="TF337855"/>
<dbReference type="PathwayCommons" id="Q8IXS0"/>
<dbReference type="SignaLink" id="Q8IXS0"/>
<dbReference type="BioGRID-ORCS" id="222826">
    <property type="hits" value="17 hits in 1147 CRISPR screens"/>
</dbReference>
<dbReference type="ChiTaRS" id="FAM217A">
    <property type="organism name" value="human"/>
</dbReference>
<dbReference type="GenomeRNAi" id="222826"/>
<dbReference type="Pharos" id="Q8IXS0">
    <property type="development level" value="Tdark"/>
</dbReference>
<dbReference type="PRO" id="PR:Q8IXS0"/>
<dbReference type="Proteomes" id="UP000005640">
    <property type="component" value="Chromosome 6"/>
</dbReference>
<dbReference type="RNAct" id="Q8IXS0">
    <property type="molecule type" value="protein"/>
</dbReference>
<dbReference type="Bgee" id="ENSG00000145975">
    <property type="expression patterns" value="Expressed in sperm and 104 other cell types or tissues"/>
</dbReference>
<dbReference type="ExpressionAtlas" id="Q8IXS0">
    <property type="expression patterns" value="baseline and differential"/>
</dbReference>
<dbReference type="InterPro" id="IPR029266">
    <property type="entry name" value="FAM217"/>
</dbReference>
<dbReference type="PANTHER" id="PTHR22145:SF4">
    <property type="entry name" value="PROTEIN FAM217A"/>
    <property type="match status" value="1"/>
</dbReference>
<dbReference type="PANTHER" id="PTHR22145">
    <property type="entry name" value="SI:CH211-266K22.6"/>
    <property type="match status" value="1"/>
</dbReference>
<dbReference type="Pfam" id="PF15344">
    <property type="entry name" value="FAM217"/>
    <property type="match status" value="1"/>
</dbReference>
<comment type="interaction">
    <interactant intactId="EBI-10694567">
        <id>Q8IXS0</id>
    </interactant>
    <interactant intactId="EBI-11523345">
        <id>Q8IYF3-3</id>
        <label>TEX11</label>
    </interactant>
    <organismsDiffer>false</organismsDiffer>
    <experiments>3</experiments>
</comment>
<comment type="similarity">
    <text evidence="2">Belongs to the FAM217 family.</text>
</comment>
<organism>
    <name type="scientific">Homo sapiens</name>
    <name type="common">Human</name>
    <dbReference type="NCBI Taxonomy" id="9606"/>
    <lineage>
        <taxon>Eukaryota</taxon>
        <taxon>Metazoa</taxon>
        <taxon>Chordata</taxon>
        <taxon>Craniata</taxon>
        <taxon>Vertebrata</taxon>
        <taxon>Euteleostomi</taxon>
        <taxon>Mammalia</taxon>
        <taxon>Eutheria</taxon>
        <taxon>Euarchontoglires</taxon>
        <taxon>Primates</taxon>
        <taxon>Haplorrhini</taxon>
        <taxon>Catarrhini</taxon>
        <taxon>Hominidae</taxon>
        <taxon>Homo</taxon>
    </lineage>
</organism>
<accession>Q8IXS0</accession>
<accession>Q5JYK1</accession>
<gene>
    <name type="primary">FAM217A</name>
    <name type="synonym">C6orf146</name>
</gene>
<reference key="1">
    <citation type="journal article" date="2003" name="Nature">
        <title>The DNA sequence and analysis of human chromosome 6.</title>
        <authorList>
            <person name="Mungall A.J."/>
            <person name="Palmer S.A."/>
            <person name="Sims S.K."/>
            <person name="Edwards C.A."/>
            <person name="Ashurst J.L."/>
            <person name="Wilming L."/>
            <person name="Jones M.C."/>
            <person name="Horton R."/>
            <person name="Hunt S.E."/>
            <person name="Scott C.E."/>
            <person name="Gilbert J.G.R."/>
            <person name="Clamp M.E."/>
            <person name="Bethel G."/>
            <person name="Milne S."/>
            <person name="Ainscough R."/>
            <person name="Almeida J.P."/>
            <person name="Ambrose K.D."/>
            <person name="Andrews T.D."/>
            <person name="Ashwell R.I.S."/>
            <person name="Babbage A.K."/>
            <person name="Bagguley C.L."/>
            <person name="Bailey J."/>
            <person name="Banerjee R."/>
            <person name="Barker D.J."/>
            <person name="Barlow K.F."/>
            <person name="Bates K."/>
            <person name="Beare D.M."/>
            <person name="Beasley H."/>
            <person name="Beasley O."/>
            <person name="Bird C.P."/>
            <person name="Blakey S.E."/>
            <person name="Bray-Allen S."/>
            <person name="Brook J."/>
            <person name="Brown A.J."/>
            <person name="Brown J.Y."/>
            <person name="Burford D.C."/>
            <person name="Burrill W."/>
            <person name="Burton J."/>
            <person name="Carder C."/>
            <person name="Carter N.P."/>
            <person name="Chapman J.C."/>
            <person name="Clark S.Y."/>
            <person name="Clark G."/>
            <person name="Clee C.M."/>
            <person name="Clegg S."/>
            <person name="Cobley V."/>
            <person name="Collier R.E."/>
            <person name="Collins J.E."/>
            <person name="Colman L.K."/>
            <person name="Corby N.R."/>
            <person name="Coville G.J."/>
            <person name="Culley K.M."/>
            <person name="Dhami P."/>
            <person name="Davies J."/>
            <person name="Dunn M."/>
            <person name="Earthrowl M.E."/>
            <person name="Ellington A.E."/>
            <person name="Evans K.A."/>
            <person name="Faulkner L."/>
            <person name="Francis M.D."/>
            <person name="Frankish A."/>
            <person name="Frankland J."/>
            <person name="French L."/>
            <person name="Garner P."/>
            <person name="Garnett J."/>
            <person name="Ghori M.J."/>
            <person name="Gilby L.M."/>
            <person name="Gillson C.J."/>
            <person name="Glithero R.J."/>
            <person name="Grafham D.V."/>
            <person name="Grant M."/>
            <person name="Gribble S."/>
            <person name="Griffiths C."/>
            <person name="Griffiths M.N.D."/>
            <person name="Hall R."/>
            <person name="Halls K.S."/>
            <person name="Hammond S."/>
            <person name="Harley J.L."/>
            <person name="Hart E.A."/>
            <person name="Heath P.D."/>
            <person name="Heathcott R."/>
            <person name="Holmes S.J."/>
            <person name="Howden P.J."/>
            <person name="Howe K.L."/>
            <person name="Howell G.R."/>
            <person name="Huckle E."/>
            <person name="Humphray S.J."/>
            <person name="Humphries M.D."/>
            <person name="Hunt A.R."/>
            <person name="Johnson C.M."/>
            <person name="Joy A.A."/>
            <person name="Kay M."/>
            <person name="Keenan S.J."/>
            <person name="Kimberley A.M."/>
            <person name="King A."/>
            <person name="Laird G.K."/>
            <person name="Langford C."/>
            <person name="Lawlor S."/>
            <person name="Leongamornlert D.A."/>
            <person name="Leversha M."/>
            <person name="Lloyd C.R."/>
            <person name="Lloyd D.M."/>
            <person name="Loveland J.E."/>
            <person name="Lovell J."/>
            <person name="Martin S."/>
            <person name="Mashreghi-Mohammadi M."/>
            <person name="Maslen G.L."/>
            <person name="Matthews L."/>
            <person name="McCann O.T."/>
            <person name="McLaren S.J."/>
            <person name="McLay K."/>
            <person name="McMurray A."/>
            <person name="Moore M.J.F."/>
            <person name="Mullikin J.C."/>
            <person name="Niblett D."/>
            <person name="Nickerson T."/>
            <person name="Novik K.L."/>
            <person name="Oliver K."/>
            <person name="Overton-Larty E.K."/>
            <person name="Parker A."/>
            <person name="Patel R."/>
            <person name="Pearce A.V."/>
            <person name="Peck A.I."/>
            <person name="Phillimore B.J.C.T."/>
            <person name="Phillips S."/>
            <person name="Plumb R.W."/>
            <person name="Porter K.M."/>
            <person name="Ramsey Y."/>
            <person name="Ranby S.A."/>
            <person name="Rice C.M."/>
            <person name="Ross M.T."/>
            <person name="Searle S.M."/>
            <person name="Sehra H.K."/>
            <person name="Sheridan E."/>
            <person name="Skuce C.D."/>
            <person name="Smith S."/>
            <person name="Smith M."/>
            <person name="Spraggon L."/>
            <person name="Squares S.L."/>
            <person name="Steward C.A."/>
            <person name="Sycamore N."/>
            <person name="Tamlyn-Hall G."/>
            <person name="Tester J."/>
            <person name="Theaker A.J."/>
            <person name="Thomas D.W."/>
            <person name="Thorpe A."/>
            <person name="Tracey A."/>
            <person name="Tromans A."/>
            <person name="Tubby B."/>
            <person name="Wall M."/>
            <person name="Wallis J.M."/>
            <person name="West A.P."/>
            <person name="White S.S."/>
            <person name="Whitehead S.L."/>
            <person name="Whittaker H."/>
            <person name="Wild A."/>
            <person name="Willey D.J."/>
            <person name="Wilmer T.E."/>
            <person name="Wood J.M."/>
            <person name="Wray P.W."/>
            <person name="Wyatt J.C."/>
            <person name="Young L."/>
            <person name="Younger R.M."/>
            <person name="Bentley D.R."/>
            <person name="Coulson A."/>
            <person name="Durbin R.M."/>
            <person name="Hubbard T."/>
            <person name="Sulston J.E."/>
            <person name="Dunham I."/>
            <person name="Rogers J."/>
            <person name="Beck S."/>
        </authorList>
    </citation>
    <scope>NUCLEOTIDE SEQUENCE [LARGE SCALE GENOMIC DNA]</scope>
</reference>
<reference key="2">
    <citation type="journal article" date="2004" name="Genome Res.">
        <title>The status, quality, and expansion of the NIH full-length cDNA project: the Mammalian Gene Collection (MGC).</title>
        <authorList>
            <consortium name="The MGC Project Team"/>
        </authorList>
    </citation>
    <scope>NUCLEOTIDE SEQUENCE [LARGE SCALE MRNA]</scope>
    <scope>VARIANT ILE-431</scope>
    <source>
        <tissue>Testis</tissue>
    </source>
</reference>
<protein>
    <recommendedName>
        <fullName>Protein FAM217A</fullName>
    </recommendedName>
</protein>
<feature type="chain" id="PRO_0000089540" description="Protein FAM217A">
    <location>
        <begin position="1"/>
        <end position="508"/>
    </location>
</feature>
<feature type="sequence variant" id="VAR_056801" description="In dbSNP:rs639905.">
    <original>A</original>
    <variation>T</variation>
    <location>
        <position position="258"/>
    </location>
</feature>
<feature type="sequence variant" id="VAR_056802" description="In dbSNP:rs10080405.">
    <original>Q</original>
    <variation>P</variation>
    <location>
        <position position="309"/>
    </location>
</feature>
<feature type="sequence variant" id="VAR_056803" description="In dbSNP:rs17137618.">
    <original>C</original>
    <variation>S</variation>
    <location>
        <position position="360"/>
    </location>
</feature>
<feature type="sequence variant" id="VAR_023207" description="In dbSNP:rs595413." evidence="1">
    <original>V</original>
    <variation>I</variation>
    <location>
        <position position="431"/>
    </location>
</feature>
<feature type="sequence variant" id="VAR_056804" description="In dbSNP:rs10485172.">
    <original>M</original>
    <variation>V</variation>
    <location>
        <position position="442"/>
    </location>
</feature>
<name>F217A_HUMAN</name>
<sequence length="508" mass="57420">MGRRNENCANSLRVSNISQENLSHWNLDSEVPVSENKNLPAGRDGAAGGKINKNYLEIPVEQLMLEPNLSVHSQKSTQNSKQGIFQLWNCPLNEGSTIEKREFKKSSVETGFNVINHPIRVFTLNHPLTIASVDKQVGPYPGLPMPLGLCWPYADGDFFKNRNEIHVSSCSTIENNDGETLPAPNWNLKHGNSSVEENFTDESDLSENEKTNDTLLSYFKKVDLNLKPETIKNVEEPFTEEPNEVFPYPDFLPPPFSALDLHNLALSKSDNWKVTVDPAETSVEHLITRLLELERLQHMTIQKERPRLQTTFCTPAVTERPSSSKATPKVRQPKLCDSLSLQIPCVDKSQEKSKNNSGSCKLEQNALKRNWSNAGKYRWNSRPLSLKSSSTPKQLIETYDKNPKSSILSPCQELSFKPTIGHTNQSMVKMVSTRCLPWRSPMPVSPIPLTFPENQKEEIKAPKRNFGTKKKLYRQNIVLNRPFSIQKLNCLSPSLIAKDKCCSPIEQK</sequence>
<proteinExistence type="evidence at protein level"/>
<evidence type="ECO:0000269" key="1">
    <source>
    </source>
</evidence>
<evidence type="ECO:0000305" key="2"/>